<sequence length="398" mass="43133">MHFSTVTRDMEAFTASSLSSLGAAGGFPGAASPGADPYGPREPPPPPPRYDPCAAAAPGAPGPPPPPHAYPFAPAAGAATSAAAEPEGPGASCAAAAKAPVKKNAKVAGVSVQLEMKALWDEFNQLGTEMIVTKAGRRMFPTFQVKLFGMDPMADYMLLMDFVPVDDKRYRYAFHSSSWLVAGKADPATPGRVHYHPDSPAKGAQWMKQIVSFDKLKLTNNLLDDNGHIILNSMHRYQPRFHVVYVDPRKDSEKYAEENFKTFVFEETRFTAVTAYQNHRITQLKIASNPFAKGFRDCDPEDWPRNHRPGALPLMSAFARSRNPVASPTQPSGTEKGGHVLKDKEVKAETSRNTPEREVELLRDAGGCVNLGLPCPAECQPFNTQGLVAGRTAGDRLC</sequence>
<organism>
    <name type="scientific">Homo sapiens</name>
    <name type="common">Human</name>
    <dbReference type="NCBI Taxonomy" id="9606"/>
    <lineage>
        <taxon>Eukaryota</taxon>
        <taxon>Metazoa</taxon>
        <taxon>Chordata</taxon>
        <taxon>Craniata</taxon>
        <taxon>Vertebrata</taxon>
        <taxon>Euteleostomi</taxon>
        <taxon>Mammalia</taxon>
        <taxon>Eutheria</taxon>
        <taxon>Euarchontoglires</taxon>
        <taxon>Primates</taxon>
        <taxon>Haplorrhini</taxon>
        <taxon>Catarrhini</taxon>
        <taxon>Hominidae</taxon>
        <taxon>Homo</taxon>
    </lineage>
</organism>
<accession>O43435</accession>
<accession>C6G493</accession>
<accession>C6G494</accession>
<accession>O43436</accession>
<accession>Q96RJ2</accession>
<protein>
    <recommendedName>
        <fullName>T-box transcription factor TBX1</fullName>
        <shortName>T-box protein 1</shortName>
    </recommendedName>
    <alternativeName>
        <fullName>Testis-specific T-box protein</fullName>
    </alternativeName>
</protein>
<keyword id="KW-0002">3D-structure</keyword>
<keyword id="KW-0025">Alternative splicing</keyword>
<keyword id="KW-0217">Developmental protein</keyword>
<keyword id="KW-0225">Disease variant</keyword>
<keyword id="KW-0238">DNA-binding</keyword>
<keyword id="KW-0539">Nucleus</keyword>
<keyword id="KW-1267">Proteomics identification</keyword>
<keyword id="KW-1185">Reference proteome</keyword>
<keyword id="KW-0804">Transcription</keyword>
<keyword id="KW-0805">Transcription regulation</keyword>
<feature type="chain" id="PRO_0000184423" description="T-box transcription factor TBX1">
    <location>
        <begin position="1"/>
        <end position="398"/>
    </location>
</feature>
<feature type="DNA-binding region" description="T-box" evidence="2">
    <location>
        <begin position="119"/>
        <end position="297"/>
    </location>
</feature>
<feature type="region of interest" description="Disordered" evidence="3">
    <location>
        <begin position="23"/>
        <end position="72"/>
    </location>
</feature>
<feature type="compositionally biased region" description="Low complexity" evidence="3">
    <location>
        <begin position="29"/>
        <end position="38"/>
    </location>
</feature>
<feature type="compositionally biased region" description="Pro residues" evidence="3">
    <location>
        <begin position="40"/>
        <end position="50"/>
    </location>
</feature>
<feature type="compositionally biased region" description="Pro residues" evidence="3">
    <location>
        <begin position="60"/>
        <end position="69"/>
    </location>
</feature>
<feature type="splice variant" id="VSP_007423" description="In isoform C." evidence="11">
    <original>GGHVLKDKEVKAETSRNTPEREVELLRDAGGCVNLGLPCPAECQPFNTQGLVAGRTAGDRLC</original>
    <variation>DAAEARREFQRDAGGPAVLGDPAHPPQLLARVLSPSLPGAGGAGGLVPLPGAPGGRPSPPNPELRLEAPGASEPLHHHPYKYPAAAYDHYLGAKSRPAPYPLPGLRGHGYHPHAHPHHHHHPVSPAAAAAAAAAAAAAAANMYSSAGAAPPGSYDYCPR</variation>
    <location>
        <begin position="337"/>
        <end position="398"/>
    </location>
</feature>
<feature type="splice variant" id="VSP_006383" description="In isoform B." evidence="10">
    <original>GHVLKDKEVKAETSRNTPEREVELLRDAGGCVNLGLPCPAECQPFNTQGLVAGRTAGDRLC</original>
    <variation>LVTEGSGLQPGLLDVLLKPPSKKSESLRPPHCKDT</variation>
    <location>
        <begin position="338"/>
        <end position="398"/>
    </location>
</feature>
<feature type="sequence variant" id="VAR_035025" description="In CTHM and VCFS; dbSNP:rs28939675." evidence="5">
    <original>F</original>
    <variation>Y</variation>
    <location>
        <position position="148"/>
    </location>
</feature>
<feature type="sequence variant" id="VAR_035026" description="In VCFS; dbSNP:rs74315522." evidence="7">
    <original>H</original>
    <variation>Q</variation>
    <location>
        <position position="194"/>
    </location>
</feature>
<feature type="sequence variant" id="VAR_034545" description="In DGS; dbSNP:rs41298838." evidence="5">
    <original>G</original>
    <variation>S</variation>
    <location>
        <position position="310"/>
    </location>
</feature>
<feature type="sequence variant" id="VAR_036065" description="In a colorectal cancer sample; somatic mutation." evidence="6">
    <original>G</original>
    <variation>E</variation>
    <location>
        <position position="337"/>
    </location>
</feature>
<feature type="sequence variant" id="VAR_024657" description="In dbSNP:rs4819522.">
    <original>T</original>
    <variation>M</variation>
    <location>
        <position position="350"/>
    </location>
</feature>
<feature type="strand" evidence="14">
    <location>
        <begin position="111"/>
        <end position="114"/>
    </location>
</feature>
<feature type="helix" evidence="14">
    <location>
        <begin position="117"/>
        <end position="126"/>
    </location>
</feature>
<feature type="strand" evidence="14">
    <location>
        <begin position="129"/>
        <end position="131"/>
    </location>
</feature>
<feature type="strand" evidence="14">
    <location>
        <begin position="143"/>
        <end position="149"/>
    </location>
</feature>
<feature type="strand" evidence="14">
    <location>
        <begin position="154"/>
        <end position="165"/>
    </location>
</feature>
<feature type="strand" evidence="14">
    <location>
        <begin position="167"/>
        <end position="173"/>
    </location>
</feature>
<feature type="turn" evidence="14">
    <location>
        <begin position="174"/>
        <end position="177"/>
    </location>
</feature>
<feature type="strand" evidence="14">
    <location>
        <begin position="178"/>
        <end position="184"/>
    </location>
</feature>
<feature type="strand" evidence="14">
    <location>
        <begin position="200"/>
        <end position="202"/>
    </location>
</feature>
<feature type="helix" evidence="14">
    <location>
        <begin position="203"/>
        <end position="208"/>
    </location>
</feature>
<feature type="strand" evidence="14">
    <location>
        <begin position="211"/>
        <end position="213"/>
    </location>
</feature>
<feature type="strand" evidence="14">
    <location>
        <begin position="217"/>
        <end position="219"/>
    </location>
</feature>
<feature type="strand" evidence="14">
    <location>
        <begin position="236"/>
        <end position="245"/>
    </location>
</feature>
<feature type="strand" evidence="14">
    <location>
        <begin position="260"/>
        <end position="264"/>
    </location>
</feature>
<feature type="helix" evidence="14">
    <location>
        <begin position="266"/>
        <end position="268"/>
    </location>
</feature>
<feature type="strand" evidence="14">
    <location>
        <begin position="270"/>
        <end position="275"/>
    </location>
</feature>
<feature type="helix" evidence="14">
    <location>
        <begin position="279"/>
        <end position="288"/>
    </location>
</feature>
<feature type="helix" evidence="14">
    <location>
        <begin position="290"/>
        <end position="295"/>
    </location>
</feature>
<comment type="function">
    <text evidence="1 4 9">Transcription factor that plays a key role in cardiovascular development by promoting pharyngeal arch segmentation during embryonic development (By similarity). Also involved in craniofacial muscle development (By similarity). Together with NKX2-5, acts as a regulator of asymmetric cardiac morphogenesis by promoting expression of PITX2 (By similarity). Acts upstream of TBX1 for the formation of the thymus and parathyroid glands from the third pharyngeal pouch (By similarity). Required for hair follicle stem cell self-renewal (By similarity). Binds to the palindromic T site 5'-TTCACACCTAGGTGTGAA-3' DNA sequence (PubMed:11111039, PubMed:22095455).</text>
</comment>
<comment type="subunit">
    <text evidence="1 4 9">Binds DNA as a dimer (PubMed:11111039, PubMed:22095455). Interacts with DSCR6 (By similarity). Interacts with NKX2-5 (By similarity).</text>
</comment>
<comment type="interaction">
    <interactant intactId="EBI-21460353">
        <id>O43435</id>
    </interactant>
    <interactant intactId="EBI-12092053">
        <id>P57055</id>
        <label>RIPPLY3</label>
    </interactant>
    <organismsDiffer>false</organismsDiffer>
    <experiments>3</experiments>
</comment>
<comment type="subcellular location">
    <subcellularLocation>
        <location evidence="2">Nucleus</location>
    </subcellularLocation>
</comment>
<comment type="alternative products">
    <event type="alternative splicing"/>
    <isoform>
        <id>O43435-1</id>
        <name>A</name>
        <sequence type="displayed"/>
    </isoform>
    <isoform>
        <id>O43435-2</id>
        <name>B</name>
        <sequence type="described" ref="VSP_006383"/>
    </isoform>
    <isoform>
        <id>O43435-3</id>
        <name>C</name>
        <name>TBX1C</name>
        <sequence type="described" ref="VSP_007423"/>
    </isoform>
</comment>
<comment type="disease">
    <text>Haploinsufficiency of the TBX1 gene is responsible for most of the physical malformations present in DiGeorge syndrome (DGS) and velocardiofacial syndrome (VCFS). DGS is characterized by the association of several malformations: hypoplastic thymus and parathyroid glands, congenital conotruncal cardiopathy, and a subtle but characteristic facial dysmorphology. VCFS is marked by the association of congenital conotruncal heart defects, cleft palate or velar insufficiency, facial dysmorpholgy and learning difficulties. It is now accepted that these two syndromes represent two forms of clinical expression of the same entity manifesting at different stages of life.</text>
</comment>
<comment type="disease" evidence="5">
    <disease id="DI-01487">
        <name>DiGeorge syndrome</name>
        <acronym>DGS</acronym>
        <description>A congenital syndrome characterized by a wide spectrum of characteristics including parathyroid hypoplasia resulting in hypocalcemia, thymic hypoplasia resulting in T-cell immunodeficiency, defects in the outflow tract of the heart, and craniofacial anomalies. Disturbance of cervical neural crest migration into the derivatives of the pharyngeal arches and pouches can account for the phenotype.</description>
        <dbReference type="MIM" id="188400"/>
    </disease>
    <text>The disease is caused by variants affecting the gene represented in this entry.</text>
</comment>
<comment type="disease" evidence="5 7">
    <disease id="DI-02410">
        <name>Velocardiofacial syndrome</name>
        <acronym>VCFS</acronym>
        <description>A syndrome characterized by abnormal pharyngeal arch development that results in defective development of the parathyroid glands, thymus, and conotruncal region of the heart. The phenotype is highly variable, with no single clinical feature present in every patient. Affected individuals may present with structural or functional palatal abnormalities, cardiac defects, unique facial characteristics, hypernasal speech, hypotonia, and defective thymic development associated with impaired immune function. In addition, affected individuals may present with learning disabilities, overt developmental delay, and psychiatric disorders.</description>
        <dbReference type="MIM" id="192430"/>
    </disease>
    <text>The disease is caused by variants affecting the gene represented in this entry.</text>
</comment>
<comment type="disease">
    <disease id="DI-01424">
        <name>Conotruncal heart malformations</name>
        <acronym>CTHM</acronym>
        <description>A group of congenital heart defects involving the outflow tracts. Examples include truncus arteriosus communis, double-outlet right ventricle and transposition of great arteries. Truncus arteriosus communis is characterized by a single outflow tract instead of a separate aorta and pulmonary artery. In transposition of the great arteries, the aorta arises from the right ventricle and the pulmonary artery from the left ventricle. In double outlet of the right ventricle, both the pulmonary artery and aorta arise from the right ventricle.</description>
        <dbReference type="MIM" id="217095"/>
    </disease>
    <text>The disease is caused by variants affecting the gene represented in this entry.</text>
</comment>
<comment type="disease" evidence="8">
    <disease id="DI-02362">
        <name>Tetralogy of Fallot</name>
        <acronym>TOF</acronym>
        <description>A congenital heart anomaly which consists of pulmonary stenosis, ventricular septal defect, dextroposition of the aorta (aorta is on the right side instead of the left) and hypertrophy of the right ventricle. In this condition, blood from both ventricles (oxygen-rich and oxygen-poor) is pumped into the body often causing cyanosis.</description>
        <dbReference type="MIM" id="187500"/>
    </disease>
    <text>The disease is caused by variants affecting the gene represented in this entry.</text>
</comment>
<proteinExistence type="evidence at protein level"/>
<dbReference type="EMBL" id="AF012130">
    <property type="protein sequence ID" value="AAB94018.1"/>
    <property type="molecule type" value="mRNA"/>
</dbReference>
<dbReference type="EMBL" id="AF012131">
    <property type="protein sequence ID" value="AAB94019.1"/>
    <property type="molecule type" value="mRNA"/>
</dbReference>
<dbReference type="EMBL" id="AF373867">
    <property type="protein sequence ID" value="AAK58955.1"/>
    <property type="molecule type" value="mRNA"/>
</dbReference>
<dbReference type="EMBL" id="FJ515849">
    <property type="protein sequence ID" value="ACS13741.1"/>
    <property type="molecule type" value="Genomic_DNA"/>
</dbReference>
<dbReference type="EMBL" id="FJ515849">
    <property type="protein sequence ID" value="ACS13742.1"/>
    <property type="molecule type" value="Genomic_DNA"/>
</dbReference>
<dbReference type="EMBL" id="CH471176">
    <property type="protein sequence ID" value="EAX03024.1"/>
    <property type="molecule type" value="Genomic_DNA"/>
</dbReference>
<dbReference type="EMBL" id="CH471176">
    <property type="protein sequence ID" value="EAX03025.1"/>
    <property type="molecule type" value="Genomic_DNA"/>
</dbReference>
<dbReference type="CCDS" id="CCDS13765.1">
    <molecule id="O43435-2"/>
</dbReference>
<dbReference type="CCDS" id="CCDS13766.1">
    <molecule id="O43435-1"/>
</dbReference>
<dbReference type="CCDS" id="CCDS13767.1">
    <molecule id="O43435-3"/>
</dbReference>
<dbReference type="RefSeq" id="NP_005983.1">
    <molecule id="O43435-2"/>
    <property type="nucleotide sequence ID" value="NM_005992.1"/>
</dbReference>
<dbReference type="RefSeq" id="NP_542377.1">
    <molecule id="O43435-1"/>
    <property type="nucleotide sequence ID" value="NM_080646.2"/>
</dbReference>
<dbReference type="RefSeq" id="NP_542378.1">
    <molecule id="O43435-3"/>
    <property type="nucleotide sequence ID" value="NM_080647.1"/>
</dbReference>
<dbReference type="RefSeq" id="XP_006724375.1">
    <molecule id="O43435-3"/>
    <property type="nucleotide sequence ID" value="XM_006724312.3"/>
</dbReference>
<dbReference type="RefSeq" id="XP_016884415.1">
    <molecule id="O43435-3"/>
    <property type="nucleotide sequence ID" value="XM_017028926.2"/>
</dbReference>
<dbReference type="PDB" id="4A04">
    <property type="method" value="X-ray"/>
    <property type="resolution" value="2.58 A"/>
    <property type="chains" value="A/B=109-297"/>
</dbReference>
<dbReference type="PDBsum" id="4A04"/>
<dbReference type="SMR" id="O43435"/>
<dbReference type="BioGRID" id="112762">
    <property type="interactions" value="11"/>
</dbReference>
<dbReference type="FunCoup" id="O43435">
    <property type="interactions" value="757"/>
</dbReference>
<dbReference type="IntAct" id="O43435">
    <property type="interactions" value="3"/>
</dbReference>
<dbReference type="STRING" id="9606.ENSP00000331791"/>
<dbReference type="GlyGen" id="O43435">
    <property type="glycosylation" value="1 site"/>
</dbReference>
<dbReference type="iPTMnet" id="O43435"/>
<dbReference type="PhosphoSitePlus" id="O43435"/>
<dbReference type="BioMuta" id="TBX1"/>
<dbReference type="jPOST" id="O43435"/>
<dbReference type="MassIVE" id="O43435"/>
<dbReference type="PaxDb" id="9606-ENSP00000331791"/>
<dbReference type="PeptideAtlas" id="O43435"/>
<dbReference type="ProteomicsDB" id="48946">
    <molecule id="O43435-1"/>
</dbReference>
<dbReference type="ProteomicsDB" id="48947">
    <molecule id="O43435-2"/>
</dbReference>
<dbReference type="ProteomicsDB" id="48948">
    <molecule id="O43435-3"/>
</dbReference>
<dbReference type="Antibodypedia" id="22982">
    <property type="antibodies" value="309 antibodies from 32 providers"/>
</dbReference>
<dbReference type="DNASU" id="6899"/>
<dbReference type="Ensembl" id="ENST00000329705.11">
    <molecule id="O43435-1"/>
    <property type="protein sequence ID" value="ENSP00000331176.7"/>
    <property type="gene ID" value="ENSG00000184058.16"/>
</dbReference>
<dbReference type="Ensembl" id="ENST00000332710.8">
    <molecule id="O43435-3"/>
    <property type="protein sequence ID" value="ENSP00000331791.4"/>
    <property type="gene ID" value="ENSG00000184058.16"/>
</dbReference>
<dbReference type="Ensembl" id="ENST00000359500.7">
    <molecule id="O43435-2"/>
    <property type="protein sequence ID" value="ENSP00000352483.3"/>
    <property type="gene ID" value="ENSG00000184058.16"/>
</dbReference>
<dbReference type="GeneID" id="6899"/>
<dbReference type="KEGG" id="hsa:6899"/>
<dbReference type="UCSC" id="uc002zqa.2">
    <molecule id="O43435-1"/>
    <property type="organism name" value="human"/>
</dbReference>
<dbReference type="AGR" id="HGNC:11592"/>
<dbReference type="CTD" id="6899"/>
<dbReference type="DisGeNET" id="6899"/>
<dbReference type="GeneCards" id="TBX1"/>
<dbReference type="GeneReviews" id="TBX1"/>
<dbReference type="HGNC" id="HGNC:11592">
    <property type="gene designation" value="TBX1"/>
</dbReference>
<dbReference type="HPA" id="ENSG00000184058">
    <property type="expression patterns" value="Group enriched (skeletal muscle, tongue)"/>
</dbReference>
<dbReference type="MalaCards" id="TBX1"/>
<dbReference type="MIM" id="187500">
    <property type="type" value="phenotype"/>
</dbReference>
<dbReference type="MIM" id="188400">
    <property type="type" value="phenotype"/>
</dbReference>
<dbReference type="MIM" id="192430">
    <property type="type" value="phenotype"/>
</dbReference>
<dbReference type="MIM" id="217095">
    <property type="type" value="phenotype"/>
</dbReference>
<dbReference type="MIM" id="602054">
    <property type="type" value="gene"/>
</dbReference>
<dbReference type="neXtProt" id="NX_O43435"/>
<dbReference type="OpenTargets" id="ENSG00000184058"/>
<dbReference type="Orphanet" id="567">
    <property type="disease" value="22q11.2 deletion syndrome"/>
</dbReference>
<dbReference type="Orphanet" id="1727">
    <property type="disease" value="22q11.2 duplication syndrome"/>
</dbReference>
<dbReference type="Orphanet" id="685017">
    <property type="disease" value="Combined immunodeficiency due to TBX1 deficiency"/>
</dbReference>
<dbReference type="Orphanet" id="3384">
    <property type="disease" value="Common arterial trunk"/>
</dbReference>
<dbReference type="Orphanet" id="3303">
    <property type="disease" value="Tetralogy of Fallot"/>
</dbReference>
<dbReference type="PharmGKB" id="PA36355"/>
<dbReference type="VEuPathDB" id="HostDB:ENSG00000184058"/>
<dbReference type="eggNOG" id="KOG3586">
    <property type="taxonomic scope" value="Eukaryota"/>
</dbReference>
<dbReference type="GeneTree" id="ENSGT00940000154816"/>
<dbReference type="HOGENOM" id="CLU_014430_9_1_1"/>
<dbReference type="InParanoid" id="O43435"/>
<dbReference type="OMA" id="CKMHYST"/>
<dbReference type="OrthoDB" id="7442607at2759"/>
<dbReference type="PAN-GO" id="O43435">
    <property type="GO annotations" value="4 GO annotations based on evolutionary models"/>
</dbReference>
<dbReference type="PhylomeDB" id="O43435"/>
<dbReference type="TreeFam" id="TF106341"/>
<dbReference type="PathwayCommons" id="O43435"/>
<dbReference type="Reactome" id="R-HSA-9733709">
    <property type="pathway name" value="Cardiogenesis"/>
</dbReference>
<dbReference type="SignaLink" id="O43435"/>
<dbReference type="SIGNOR" id="O43435"/>
<dbReference type="BioGRID-ORCS" id="6899">
    <property type="hits" value="22 hits in 1189 CRISPR screens"/>
</dbReference>
<dbReference type="ChiTaRS" id="TBX1">
    <property type="organism name" value="human"/>
</dbReference>
<dbReference type="EvolutionaryTrace" id="O43435"/>
<dbReference type="GenomeRNAi" id="6899"/>
<dbReference type="Pharos" id="O43435">
    <property type="development level" value="Tbio"/>
</dbReference>
<dbReference type="PRO" id="PR:O43435"/>
<dbReference type="Proteomes" id="UP000005640">
    <property type="component" value="Chromosome 22"/>
</dbReference>
<dbReference type="RNAct" id="O43435">
    <property type="molecule type" value="protein"/>
</dbReference>
<dbReference type="Bgee" id="ENSG00000184058">
    <property type="expression patterns" value="Expressed in hindlimb stylopod muscle and 161 other cell types or tissues"/>
</dbReference>
<dbReference type="ExpressionAtlas" id="O43435">
    <property type="expression patterns" value="baseline and differential"/>
</dbReference>
<dbReference type="GO" id="GO:0000785">
    <property type="term" value="C:chromatin"/>
    <property type="evidence" value="ECO:0000247"/>
    <property type="project" value="NTNU_SB"/>
</dbReference>
<dbReference type="GO" id="GO:0005634">
    <property type="term" value="C:nucleus"/>
    <property type="evidence" value="ECO:0000318"/>
    <property type="project" value="GO_Central"/>
</dbReference>
<dbReference type="GO" id="GO:0003677">
    <property type="term" value="F:DNA binding"/>
    <property type="evidence" value="ECO:0000314"/>
    <property type="project" value="UniProtKB"/>
</dbReference>
<dbReference type="GO" id="GO:0000981">
    <property type="term" value="F:DNA-binding transcription factor activity, RNA polymerase II-specific"/>
    <property type="evidence" value="ECO:0000247"/>
    <property type="project" value="NTNU_SB"/>
</dbReference>
<dbReference type="GO" id="GO:0046983">
    <property type="term" value="F:protein dimerization activity"/>
    <property type="evidence" value="ECO:0000304"/>
    <property type="project" value="UniProtKB"/>
</dbReference>
<dbReference type="GO" id="GO:0042803">
    <property type="term" value="F:protein homodimerization activity"/>
    <property type="evidence" value="ECO:0000314"/>
    <property type="project" value="UniProtKB"/>
</dbReference>
<dbReference type="GO" id="GO:0000978">
    <property type="term" value="F:RNA polymerase II cis-regulatory region sequence-specific DNA binding"/>
    <property type="evidence" value="ECO:0000318"/>
    <property type="project" value="GO_Central"/>
</dbReference>
<dbReference type="GO" id="GO:0043565">
    <property type="term" value="F:sequence-specific DNA binding"/>
    <property type="evidence" value="ECO:0000314"/>
    <property type="project" value="UniProtKB"/>
</dbReference>
<dbReference type="GO" id="GO:1990837">
    <property type="term" value="F:sequence-specific double-stranded DNA binding"/>
    <property type="evidence" value="ECO:0000314"/>
    <property type="project" value="ARUK-UCL"/>
</dbReference>
<dbReference type="GO" id="GO:0001525">
    <property type="term" value="P:angiogenesis"/>
    <property type="evidence" value="ECO:0000250"/>
    <property type="project" value="UniProtKB"/>
</dbReference>
<dbReference type="GO" id="GO:0009952">
    <property type="term" value="P:anterior/posterior pattern specification"/>
    <property type="evidence" value="ECO:0000250"/>
    <property type="project" value="UniProtKB"/>
</dbReference>
<dbReference type="GO" id="GO:0035909">
    <property type="term" value="P:aorta morphogenesis"/>
    <property type="evidence" value="ECO:0000250"/>
    <property type="project" value="UniProtKB"/>
</dbReference>
<dbReference type="GO" id="GO:0048844">
    <property type="term" value="P:artery morphogenesis"/>
    <property type="evidence" value="ECO:0000250"/>
    <property type="project" value="UniProtKB"/>
</dbReference>
<dbReference type="GO" id="GO:0001568">
    <property type="term" value="P:blood vessel development"/>
    <property type="evidence" value="ECO:0000250"/>
    <property type="project" value="UniProtKB"/>
</dbReference>
<dbReference type="GO" id="GO:0048514">
    <property type="term" value="P:blood vessel morphogenesis"/>
    <property type="evidence" value="ECO:0000250"/>
    <property type="project" value="UniProtKB"/>
</dbReference>
<dbReference type="GO" id="GO:0001708">
    <property type="term" value="P:cell fate specification"/>
    <property type="evidence" value="ECO:0000250"/>
    <property type="project" value="UniProtKB"/>
</dbReference>
<dbReference type="GO" id="GO:0008283">
    <property type="term" value="P:cell population proliferation"/>
    <property type="evidence" value="ECO:0000250"/>
    <property type="project" value="UniProtKB"/>
</dbReference>
<dbReference type="GO" id="GO:0044344">
    <property type="term" value="P:cellular response to fibroblast growth factor stimulus"/>
    <property type="evidence" value="ECO:0000250"/>
    <property type="project" value="UniProtKB"/>
</dbReference>
<dbReference type="GO" id="GO:0071300">
    <property type="term" value="P:cellular response to retinoic acid"/>
    <property type="evidence" value="ECO:0000250"/>
    <property type="project" value="UniProtKB"/>
</dbReference>
<dbReference type="GO" id="GO:0090103">
    <property type="term" value="P:cochlea morphogenesis"/>
    <property type="evidence" value="ECO:0000250"/>
    <property type="project" value="UniProtKB"/>
</dbReference>
<dbReference type="GO" id="GO:0060982">
    <property type="term" value="P:coronary artery morphogenesis"/>
    <property type="evidence" value="ECO:0000250"/>
    <property type="project" value="UniProtKB"/>
</dbReference>
<dbReference type="GO" id="GO:0007368">
    <property type="term" value="P:determination of left/right symmetry"/>
    <property type="evidence" value="ECO:0000250"/>
    <property type="project" value="UniProtKB"/>
</dbReference>
<dbReference type="GO" id="GO:0042471">
    <property type="term" value="P:ear morphogenesis"/>
    <property type="evidence" value="ECO:0000250"/>
    <property type="project" value="UniProtKB"/>
</dbReference>
<dbReference type="GO" id="GO:0048701">
    <property type="term" value="P:embryonic cranial skeleton morphogenesis"/>
    <property type="evidence" value="ECO:0000250"/>
    <property type="project" value="UniProtKB"/>
</dbReference>
<dbReference type="GO" id="GO:0048703">
    <property type="term" value="P:embryonic viscerocranium morphogenesis"/>
    <property type="evidence" value="ECO:0000315"/>
    <property type="project" value="UniProtKB"/>
</dbReference>
<dbReference type="GO" id="GO:0070166">
    <property type="term" value="P:enamel mineralization"/>
    <property type="evidence" value="ECO:0000250"/>
    <property type="project" value="UniProtKB"/>
</dbReference>
<dbReference type="GO" id="GO:0030855">
    <property type="term" value="P:epithelial cell differentiation"/>
    <property type="evidence" value="ECO:0000250"/>
    <property type="project" value="UniProtKB"/>
</dbReference>
<dbReference type="GO" id="GO:0060325">
    <property type="term" value="P:face morphogenesis"/>
    <property type="evidence" value="ECO:0000250"/>
    <property type="project" value="UniProtKB"/>
</dbReference>
<dbReference type="GO" id="GO:0007507">
    <property type="term" value="P:heart development"/>
    <property type="evidence" value="ECO:0000315"/>
    <property type="project" value="UniProtKB"/>
</dbReference>
<dbReference type="GO" id="GO:0003007">
    <property type="term" value="P:heart morphogenesis"/>
    <property type="evidence" value="ECO:0000250"/>
    <property type="project" value="UniProtKB"/>
</dbReference>
<dbReference type="GO" id="GO:0042472">
    <property type="term" value="P:inner ear morphogenesis"/>
    <property type="evidence" value="ECO:0000250"/>
    <property type="project" value="UniProtKB"/>
</dbReference>
<dbReference type="GO" id="GO:0001945">
    <property type="term" value="P:lymph vessel development"/>
    <property type="evidence" value="ECO:0000250"/>
    <property type="project" value="UniProtKB"/>
</dbReference>
<dbReference type="GO" id="GO:0097152">
    <property type="term" value="P:mesenchymal cell apoptotic process"/>
    <property type="evidence" value="ECO:0000250"/>
    <property type="project" value="UniProtKB"/>
</dbReference>
<dbReference type="GO" id="GO:0007498">
    <property type="term" value="P:mesoderm development"/>
    <property type="evidence" value="ECO:0000250"/>
    <property type="project" value="UniProtKB"/>
</dbReference>
<dbReference type="GO" id="GO:0042474">
    <property type="term" value="P:middle ear morphogenesis"/>
    <property type="evidence" value="ECO:0000250"/>
    <property type="project" value="UniProtKB"/>
</dbReference>
<dbReference type="GO" id="GO:0042693">
    <property type="term" value="P:muscle cell fate commitment"/>
    <property type="evidence" value="ECO:0000250"/>
    <property type="project" value="UniProtKB"/>
</dbReference>
<dbReference type="GO" id="GO:0007517">
    <property type="term" value="P:muscle organ development"/>
    <property type="evidence" value="ECO:0000250"/>
    <property type="project" value="UniProtKB"/>
</dbReference>
<dbReference type="GO" id="GO:0048644">
    <property type="term" value="P:muscle organ morphogenesis"/>
    <property type="evidence" value="ECO:0000250"/>
    <property type="project" value="UniProtKB"/>
</dbReference>
<dbReference type="GO" id="GO:0060415">
    <property type="term" value="P:muscle tissue morphogenesis"/>
    <property type="evidence" value="ECO:0000250"/>
    <property type="project" value="UniProtKB"/>
</dbReference>
<dbReference type="GO" id="GO:0045596">
    <property type="term" value="P:negative regulation of cell differentiation"/>
    <property type="evidence" value="ECO:0000250"/>
    <property type="project" value="UniProtKB"/>
</dbReference>
<dbReference type="GO" id="GO:2001054">
    <property type="term" value="P:negative regulation of mesenchymal cell apoptotic process"/>
    <property type="evidence" value="ECO:0000250"/>
    <property type="project" value="UniProtKB"/>
</dbReference>
<dbReference type="GO" id="GO:0001755">
    <property type="term" value="P:neural crest cell migration"/>
    <property type="evidence" value="ECO:0000250"/>
    <property type="project" value="UniProtKB"/>
</dbReference>
<dbReference type="GO" id="GO:0042475">
    <property type="term" value="P:odontogenesis of dentin-containing tooth"/>
    <property type="evidence" value="ECO:0000250"/>
    <property type="project" value="UniProtKB"/>
</dbReference>
<dbReference type="GO" id="GO:0042473">
    <property type="term" value="P:outer ear morphogenesis"/>
    <property type="evidence" value="ECO:0000250"/>
    <property type="project" value="UniProtKB"/>
</dbReference>
<dbReference type="GO" id="GO:0003151">
    <property type="term" value="P:outflow tract morphogenesis"/>
    <property type="evidence" value="ECO:0000250"/>
    <property type="project" value="UniProtKB"/>
</dbReference>
<dbReference type="GO" id="GO:0003148">
    <property type="term" value="P:outflow tract septum morphogenesis"/>
    <property type="evidence" value="ECO:0000250"/>
    <property type="project" value="UniProtKB"/>
</dbReference>
<dbReference type="GO" id="GO:0060017">
    <property type="term" value="P:parathyroid gland development"/>
    <property type="evidence" value="ECO:0000315"/>
    <property type="project" value="UniProtKB"/>
</dbReference>
<dbReference type="GO" id="GO:0007389">
    <property type="term" value="P:pattern specification process"/>
    <property type="evidence" value="ECO:0000250"/>
    <property type="project" value="UniProtKB"/>
</dbReference>
<dbReference type="GO" id="GO:0060037">
    <property type="term" value="P:pharyngeal system development"/>
    <property type="evidence" value="ECO:0000315"/>
    <property type="project" value="UniProtKB"/>
</dbReference>
<dbReference type="GO" id="GO:0008284">
    <property type="term" value="P:positive regulation of cell population proliferation"/>
    <property type="evidence" value="ECO:0000250"/>
    <property type="project" value="UniProtKB"/>
</dbReference>
<dbReference type="GO" id="GO:0045893">
    <property type="term" value="P:positive regulation of DNA-templated transcription"/>
    <property type="evidence" value="ECO:0000314"/>
    <property type="project" value="UniProtKB"/>
</dbReference>
<dbReference type="GO" id="GO:0050679">
    <property type="term" value="P:positive regulation of epithelial cell proliferation"/>
    <property type="evidence" value="ECO:0000250"/>
    <property type="project" value="UniProtKB"/>
</dbReference>
<dbReference type="GO" id="GO:0043410">
    <property type="term" value="P:positive regulation of MAPK cascade"/>
    <property type="evidence" value="ECO:0000250"/>
    <property type="project" value="UniProtKB"/>
</dbReference>
<dbReference type="GO" id="GO:0002053">
    <property type="term" value="P:positive regulation of mesenchymal cell proliferation"/>
    <property type="evidence" value="ECO:0000250"/>
    <property type="project" value="UniProtKB"/>
</dbReference>
<dbReference type="GO" id="GO:0001934">
    <property type="term" value="P:positive regulation of protein phosphorylation"/>
    <property type="evidence" value="ECO:0000250"/>
    <property type="project" value="UniProtKB"/>
</dbReference>
<dbReference type="GO" id="GO:2001037">
    <property type="term" value="P:positive regulation of tongue muscle cell differentiation"/>
    <property type="evidence" value="ECO:0000250"/>
    <property type="project" value="UniProtKB"/>
</dbReference>
<dbReference type="GO" id="GO:0045944">
    <property type="term" value="P:positive regulation of transcription by RNA polymerase II"/>
    <property type="evidence" value="ECO:0000250"/>
    <property type="project" value="UniProtKB"/>
</dbReference>
<dbReference type="GO" id="GO:2000027">
    <property type="term" value="P:regulation of animal organ morphogenesis"/>
    <property type="evidence" value="ECO:0000250"/>
    <property type="project" value="UniProtKB"/>
</dbReference>
<dbReference type="GO" id="GO:0006357">
    <property type="term" value="P:regulation of transcription by RNA polymerase II"/>
    <property type="evidence" value="ECO:0000250"/>
    <property type="project" value="UniProtKB"/>
</dbReference>
<dbReference type="GO" id="GO:0048384">
    <property type="term" value="P:retinoic acid receptor signaling pathway"/>
    <property type="evidence" value="ECO:0000250"/>
    <property type="project" value="UniProtKB"/>
</dbReference>
<dbReference type="GO" id="GO:0048752">
    <property type="term" value="P:semicircular canal morphogenesis"/>
    <property type="evidence" value="ECO:0000250"/>
    <property type="project" value="UniProtKB"/>
</dbReference>
<dbReference type="GO" id="GO:0007605">
    <property type="term" value="P:sensory perception of sound"/>
    <property type="evidence" value="ECO:0000250"/>
    <property type="project" value="UniProtKB"/>
</dbReference>
<dbReference type="GO" id="GO:0035176">
    <property type="term" value="P:social behavior"/>
    <property type="evidence" value="ECO:0000250"/>
    <property type="project" value="UniProtKB"/>
</dbReference>
<dbReference type="GO" id="GO:0060023">
    <property type="term" value="P:soft palate development"/>
    <property type="evidence" value="ECO:0000315"/>
    <property type="project" value="UniProtKB"/>
</dbReference>
<dbReference type="GO" id="GO:0035019">
    <property type="term" value="P:somatic stem cell population maintenance"/>
    <property type="evidence" value="ECO:0000250"/>
    <property type="project" value="UniProtKB"/>
</dbReference>
<dbReference type="GO" id="GO:0048538">
    <property type="term" value="P:thymus development"/>
    <property type="evidence" value="ECO:0000315"/>
    <property type="project" value="UniProtKB"/>
</dbReference>
<dbReference type="GO" id="GO:0030878">
    <property type="term" value="P:thyroid gland development"/>
    <property type="evidence" value="ECO:0000250"/>
    <property type="project" value="UniProtKB"/>
</dbReference>
<dbReference type="GO" id="GO:0043587">
    <property type="term" value="P:tongue morphogenesis"/>
    <property type="evidence" value="ECO:0000250"/>
    <property type="project" value="UniProtKB"/>
</dbReference>
<dbReference type="GO" id="GO:0021644">
    <property type="term" value="P:vagus nerve morphogenesis"/>
    <property type="evidence" value="ECO:0000250"/>
    <property type="project" value="UniProtKB"/>
</dbReference>
<dbReference type="CDD" id="cd20187">
    <property type="entry name" value="T-box_TBX1_10-like"/>
    <property type="match status" value="1"/>
</dbReference>
<dbReference type="FunFam" id="2.60.40.820:FF:000006">
    <property type="entry name" value="T-box transcription factor"/>
    <property type="match status" value="1"/>
</dbReference>
<dbReference type="Gene3D" id="2.60.40.820">
    <property type="entry name" value="Transcription factor, T-box"/>
    <property type="match status" value="1"/>
</dbReference>
<dbReference type="InterPro" id="IPR008967">
    <property type="entry name" value="p53-like_TF_DNA-bd_sf"/>
</dbReference>
<dbReference type="InterPro" id="IPR046360">
    <property type="entry name" value="T-box_DNA-bd"/>
</dbReference>
<dbReference type="InterPro" id="IPR036960">
    <property type="entry name" value="T-box_sf"/>
</dbReference>
<dbReference type="InterPro" id="IPR001699">
    <property type="entry name" value="TF_T-box"/>
</dbReference>
<dbReference type="InterPro" id="IPR018186">
    <property type="entry name" value="TF_T-box_CS"/>
</dbReference>
<dbReference type="PANTHER" id="PTHR11267">
    <property type="entry name" value="T-BOX PROTEIN-RELATED"/>
    <property type="match status" value="1"/>
</dbReference>
<dbReference type="PANTHER" id="PTHR11267:SF104">
    <property type="entry name" value="T-BOX TRANSCRIPTION FACTOR TBX1"/>
    <property type="match status" value="1"/>
</dbReference>
<dbReference type="Pfam" id="PF00907">
    <property type="entry name" value="T-box"/>
    <property type="match status" value="1"/>
</dbReference>
<dbReference type="PRINTS" id="PR00937">
    <property type="entry name" value="TBOX"/>
</dbReference>
<dbReference type="SMART" id="SM00425">
    <property type="entry name" value="TBOX"/>
    <property type="match status" value="1"/>
</dbReference>
<dbReference type="SUPFAM" id="SSF49417">
    <property type="entry name" value="p53-like transcription factors"/>
    <property type="match status" value="1"/>
</dbReference>
<dbReference type="PROSITE" id="PS01283">
    <property type="entry name" value="TBOX_1"/>
    <property type="match status" value="1"/>
</dbReference>
<dbReference type="PROSITE" id="PS01264">
    <property type="entry name" value="TBOX_2"/>
    <property type="match status" value="1"/>
</dbReference>
<dbReference type="PROSITE" id="PS50252">
    <property type="entry name" value="TBOX_3"/>
    <property type="match status" value="1"/>
</dbReference>
<name>TBX1_HUMAN</name>
<evidence type="ECO:0000250" key="1">
    <source>
        <dbReference type="UniProtKB" id="P70323"/>
    </source>
</evidence>
<evidence type="ECO:0000255" key="2">
    <source>
        <dbReference type="PROSITE-ProRule" id="PRU00201"/>
    </source>
</evidence>
<evidence type="ECO:0000256" key="3">
    <source>
        <dbReference type="SAM" id="MobiDB-lite"/>
    </source>
</evidence>
<evidence type="ECO:0000269" key="4">
    <source>
    </source>
</evidence>
<evidence type="ECO:0000269" key="5">
    <source>
    </source>
</evidence>
<evidence type="ECO:0000269" key="6">
    <source>
    </source>
</evidence>
<evidence type="ECO:0000269" key="7">
    <source>
    </source>
</evidence>
<evidence type="ECO:0000269" key="8">
    <source>
    </source>
</evidence>
<evidence type="ECO:0000269" key="9">
    <source>
    </source>
</evidence>
<evidence type="ECO:0000303" key="10">
    <source>
    </source>
</evidence>
<evidence type="ECO:0000303" key="11">
    <source ref="2"/>
</evidence>
<evidence type="ECO:0000312" key="12">
    <source>
        <dbReference type="HGNC" id="HGNC:11592"/>
    </source>
</evidence>
<evidence type="ECO:0007744" key="13">
    <source>
        <dbReference type="PDB" id="4A04"/>
    </source>
</evidence>
<evidence type="ECO:0007829" key="14">
    <source>
        <dbReference type="PDB" id="4A04"/>
    </source>
</evidence>
<reference key="1">
    <citation type="journal article" date="1997" name="Genomics">
        <title>Isolation and characterization of a gene from the DiGeorge chromosomal region homologous to the mouse Tbx1 gene.</title>
        <authorList>
            <person name="Chieffo C."/>
            <person name="Garvey N."/>
            <person name="Gong W."/>
            <person name="Roe B."/>
            <person name="Zhang G."/>
            <person name="Silver L."/>
            <person name="Emanuel B.S."/>
            <person name="Budarf M.L."/>
        </authorList>
    </citation>
    <scope>NUCLEOTIDE SEQUENCE [MRNA] (ISOFORMS A AND B)</scope>
    <source>
        <tissue>Skeletal muscle</tissue>
        <tissue>Testis</tissue>
    </source>
</reference>
<reference key="2">
    <citation type="submission" date="2001-04" db="EMBL/GenBank/DDBJ databases">
        <title>Mutation analysis of TBX1 in 105 patients.</title>
        <authorList>
            <person name="Gong W."/>
            <person name="Gottlieb S."/>
            <person name="Budarf M.L."/>
        </authorList>
    </citation>
    <scope>NUCLEOTIDE SEQUENCE [MRNA] (ISOFORM C)</scope>
</reference>
<reference key="3">
    <citation type="submission" date="2008-12" db="EMBL/GenBank/DDBJ databases">
        <authorList>
            <consortium name="NHLBI resequencing and genotyping service (RS&amp;G)"/>
        </authorList>
    </citation>
    <scope>NUCLEOTIDE SEQUENCE [GENOMIC DNA]</scope>
</reference>
<reference key="4">
    <citation type="submission" date="2005-09" db="EMBL/GenBank/DDBJ databases">
        <authorList>
            <person name="Mural R.J."/>
            <person name="Istrail S."/>
            <person name="Sutton G.G."/>
            <person name="Florea L."/>
            <person name="Halpern A.L."/>
            <person name="Mobarry C.M."/>
            <person name="Lippert R."/>
            <person name="Walenz B."/>
            <person name="Shatkay H."/>
            <person name="Dew I."/>
            <person name="Miller J.R."/>
            <person name="Flanigan M.J."/>
            <person name="Edwards N.J."/>
            <person name="Bolanos R."/>
            <person name="Fasulo D."/>
            <person name="Halldorsson B.V."/>
            <person name="Hannenhalli S."/>
            <person name="Turner R."/>
            <person name="Yooseph S."/>
            <person name="Lu F."/>
            <person name="Nusskern D.R."/>
            <person name="Shue B.C."/>
            <person name="Zheng X.H."/>
            <person name="Zhong F."/>
            <person name="Delcher A.L."/>
            <person name="Huson D.H."/>
            <person name="Kravitz S.A."/>
            <person name="Mouchard L."/>
            <person name="Reinert K."/>
            <person name="Remington K.A."/>
            <person name="Clark A.G."/>
            <person name="Waterman M.S."/>
            <person name="Eichler E.E."/>
            <person name="Adams M.D."/>
            <person name="Hunkapiller M.W."/>
            <person name="Myers E.W."/>
            <person name="Venter J.C."/>
        </authorList>
    </citation>
    <scope>NUCLEOTIDE SEQUENCE [LARGE SCALE GENOMIC DNA]</scope>
</reference>
<reference key="5">
    <citation type="journal article" date="2000" name="Gene">
        <title>Differential DNA binding and transcription modulation by three T-box proteins, T, TBX1 and TBX2.</title>
        <authorList>
            <person name="Sinha S."/>
            <person name="Abraham S."/>
            <person name="Gronostajski R.M."/>
            <person name="Campbell C.E."/>
        </authorList>
    </citation>
    <scope>FUNCTION</scope>
    <scope>SUBUNIT</scope>
</reference>
<reference key="6">
    <citation type="journal article" date="2010" name="J. Med. Genet.">
        <title>Comprehensive genotype-phenotype analysis in 230 patients with tetralogy of Fallot.</title>
        <authorList>
            <person name="Rauch R."/>
            <person name="Hofbeck M."/>
            <person name="Zweier C."/>
            <person name="Koch A."/>
            <person name="Zink S."/>
            <person name="Trautmann U."/>
            <person name="Hoyer J."/>
            <person name="Kaulitz R."/>
            <person name="Singer H."/>
            <person name="Rauch A."/>
        </authorList>
    </citation>
    <scope>INVOLVEMENT IN TOF</scope>
</reference>
<reference key="7">
    <citation type="journal article" date="2013" name="J. Proteome Res.">
        <title>Toward a comprehensive characterization of a human cancer cell phosphoproteome.</title>
        <authorList>
            <person name="Zhou H."/>
            <person name="Di Palma S."/>
            <person name="Preisinger C."/>
            <person name="Peng M."/>
            <person name="Polat A.N."/>
            <person name="Heck A.J."/>
            <person name="Mohammed S."/>
        </authorList>
    </citation>
    <scope>IDENTIFICATION BY MASS SPECTROMETRY [LARGE SCALE ANALYSIS]</scope>
    <source>
        <tissue>Erythroleukemia</tissue>
    </source>
</reference>
<reference evidence="13" key="8">
    <citation type="journal article" date="2012" name="Proteins">
        <title>Structure of the DNA-bound T-box domain of human TBX1, a transcription factor associated with the DiGeorge syndrome.</title>
        <authorList>
            <person name="El Omari K."/>
            <person name="De Mesmaeker J."/>
            <person name="Karia D."/>
            <person name="Ginn H."/>
            <person name="Bhattacharya S."/>
            <person name="Mancini E.J."/>
        </authorList>
    </citation>
    <scope>X-RAY CRYSTALLOGRAPHY (2.58 ANGSTROMS) OF 109-297 IN COMPLEX WITH DNA</scope>
    <scope>FUNCTION</scope>
    <scope>SUBUNIT</scope>
</reference>
<reference key="9">
    <citation type="journal article" date="2003" name="Lancet">
        <title>Role of TBX1 in human del22q11.2 syndrome.</title>
        <authorList>
            <person name="Yagi H."/>
            <person name="Furutani Y."/>
            <person name="Hamada H."/>
            <person name="Sasaki T."/>
            <person name="Asakawa S."/>
            <person name="Minoshima S."/>
            <person name="Ichida F."/>
            <person name="Joo K."/>
            <person name="Kimura M."/>
            <person name="Imamura S."/>
            <person name="Kamatani N."/>
            <person name="Momma K."/>
            <person name="Takao A."/>
            <person name="Nakazawa M."/>
            <person name="Shimizu N."/>
            <person name="Matsuoka R."/>
        </authorList>
    </citation>
    <scope>VARIANT CTMH/VCFS TYR-148</scope>
    <scope>VARIANT DGS SER-310</scope>
</reference>
<reference key="10">
    <citation type="journal article" date="2006" name="Science">
        <title>The consensus coding sequences of human breast and colorectal cancers.</title>
        <authorList>
            <person name="Sjoeblom T."/>
            <person name="Jones S."/>
            <person name="Wood L.D."/>
            <person name="Parsons D.W."/>
            <person name="Lin J."/>
            <person name="Barber T.D."/>
            <person name="Mandelker D."/>
            <person name="Leary R.J."/>
            <person name="Ptak J."/>
            <person name="Silliman N."/>
            <person name="Szabo S."/>
            <person name="Buckhaults P."/>
            <person name="Farrell C."/>
            <person name="Meeh P."/>
            <person name="Markowitz S.D."/>
            <person name="Willis J."/>
            <person name="Dawson D."/>
            <person name="Willson J.K.V."/>
            <person name="Gazdar A.F."/>
            <person name="Hartigan J."/>
            <person name="Wu L."/>
            <person name="Liu C."/>
            <person name="Parmigiani G."/>
            <person name="Park B.H."/>
            <person name="Bachman K.E."/>
            <person name="Papadopoulos N."/>
            <person name="Vogelstein B."/>
            <person name="Kinzler K.W."/>
            <person name="Velculescu V.E."/>
        </authorList>
    </citation>
    <scope>VARIANT [LARGE SCALE ANALYSIS] GLU-337</scope>
</reference>
<reference key="11">
    <citation type="journal article" date="2007" name="Am. J. Hum. Genet.">
        <title>Human TBX1 missense mutations cause gain of function resulting in the same phenotype as 22q11.2 deletions.</title>
        <authorList>
            <person name="Zweier C."/>
            <person name="Sticht H."/>
            <person name="Aydin-Yaylagul I."/>
            <person name="Campbell C.E."/>
            <person name="Rauch A."/>
        </authorList>
    </citation>
    <scope>VARIANT VCFS GLN-194</scope>
</reference>
<gene>
    <name evidence="10 12" type="primary">TBX1</name>
</gene>